<organism>
    <name type="scientific">Cereibacter sphaeroides (strain ATCC 17023 / DSM 158 / JCM 6121 / CCUG 31486 / LMG 2827 / NBRC 12203 / NCIMB 8253 / ATH 2.4.1.)</name>
    <name type="common">Rhodobacter sphaeroides</name>
    <dbReference type="NCBI Taxonomy" id="272943"/>
    <lineage>
        <taxon>Bacteria</taxon>
        <taxon>Pseudomonadati</taxon>
        <taxon>Pseudomonadota</taxon>
        <taxon>Alphaproteobacteria</taxon>
        <taxon>Rhodobacterales</taxon>
        <taxon>Paracoccaceae</taxon>
        <taxon>Cereibacter</taxon>
    </lineage>
</organism>
<comment type="catalytic activity">
    <reaction evidence="1">
        <text>L-histidinol phosphate + 2-oxoglutarate = 3-(imidazol-4-yl)-2-oxopropyl phosphate + L-glutamate</text>
        <dbReference type="Rhea" id="RHEA:23744"/>
        <dbReference type="ChEBI" id="CHEBI:16810"/>
        <dbReference type="ChEBI" id="CHEBI:29985"/>
        <dbReference type="ChEBI" id="CHEBI:57766"/>
        <dbReference type="ChEBI" id="CHEBI:57980"/>
        <dbReference type="EC" id="2.6.1.9"/>
    </reaction>
</comment>
<comment type="cofactor">
    <cofactor evidence="1">
        <name>pyridoxal 5'-phosphate</name>
        <dbReference type="ChEBI" id="CHEBI:597326"/>
    </cofactor>
</comment>
<comment type="pathway">
    <text evidence="1">Amino-acid biosynthesis; L-histidine biosynthesis; L-histidine from 5-phospho-alpha-D-ribose 1-diphosphate: step 7/9.</text>
</comment>
<comment type="subunit">
    <text evidence="1">Homodimer.</text>
</comment>
<comment type="similarity">
    <text evidence="1">Belongs to the class-II pyridoxal-phosphate-dependent aminotransferase family. Histidinol-phosphate aminotransferase subfamily.</text>
</comment>
<accession>Q3J445</accession>
<keyword id="KW-0028">Amino-acid biosynthesis</keyword>
<keyword id="KW-0032">Aminotransferase</keyword>
<keyword id="KW-0368">Histidine biosynthesis</keyword>
<keyword id="KW-0663">Pyridoxal phosphate</keyword>
<keyword id="KW-1185">Reference proteome</keyword>
<keyword id="KW-0808">Transferase</keyword>
<gene>
    <name evidence="1" type="primary">hisC</name>
    <name type="ordered locus">RHOS4_08710</name>
    <name type="ORF">RSP_2284</name>
</gene>
<dbReference type="EC" id="2.6.1.9" evidence="1"/>
<dbReference type="EMBL" id="CP000143">
    <property type="protein sequence ID" value="ABA78439.1"/>
    <property type="molecule type" value="Genomic_DNA"/>
</dbReference>
<dbReference type="RefSeq" id="WP_011337377.1">
    <property type="nucleotide sequence ID" value="NZ_CP030271.1"/>
</dbReference>
<dbReference type="RefSeq" id="YP_352340.1">
    <property type="nucleotide sequence ID" value="NC_007493.2"/>
</dbReference>
<dbReference type="SMR" id="Q3J445"/>
<dbReference type="STRING" id="272943.RSP_2284"/>
<dbReference type="EnsemblBacteria" id="ABA78439">
    <property type="protein sequence ID" value="ABA78439"/>
    <property type="gene ID" value="RSP_2284"/>
</dbReference>
<dbReference type="GeneID" id="3719815"/>
<dbReference type="KEGG" id="rsp:RSP_2284"/>
<dbReference type="PATRIC" id="fig|272943.9.peg.1194"/>
<dbReference type="eggNOG" id="COG0079">
    <property type="taxonomic scope" value="Bacteria"/>
</dbReference>
<dbReference type="OrthoDB" id="9809616at2"/>
<dbReference type="PhylomeDB" id="Q3J445"/>
<dbReference type="UniPathway" id="UPA00031">
    <property type="reaction ID" value="UER00012"/>
</dbReference>
<dbReference type="Proteomes" id="UP000002703">
    <property type="component" value="Chromosome 1"/>
</dbReference>
<dbReference type="GO" id="GO:0004400">
    <property type="term" value="F:histidinol-phosphate transaminase activity"/>
    <property type="evidence" value="ECO:0007669"/>
    <property type="project" value="UniProtKB-UniRule"/>
</dbReference>
<dbReference type="GO" id="GO:0030170">
    <property type="term" value="F:pyridoxal phosphate binding"/>
    <property type="evidence" value="ECO:0007669"/>
    <property type="project" value="InterPro"/>
</dbReference>
<dbReference type="GO" id="GO:0000105">
    <property type="term" value="P:L-histidine biosynthetic process"/>
    <property type="evidence" value="ECO:0007669"/>
    <property type="project" value="UniProtKB-UniRule"/>
</dbReference>
<dbReference type="CDD" id="cd00609">
    <property type="entry name" value="AAT_like"/>
    <property type="match status" value="1"/>
</dbReference>
<dbReference type="Gene3D" id="3.90.1150.10">
    <property type="entry name" value="Aspartate Aminotransferase, domain 1"/>
    <property type="match status" value="1"/>
</dbReference>
<dbReference type="Gene3D" id="3.40.640.10">
    <property type="entry name" value="Type I PLP-dependent aspartate aminotransferase-like (Major domain)"/>
    <property type="match status" value="1"/>
</dbReference>
<dbReference type="HAMAP" id="MF_01023">
    <property type="entry name" value="HisC_aminotrans_2"/>
    <property type="match status" value="1"/>
</dbReference>
<dbReference type="InterPro" id="IPR004839">
    <property type="entry name" value="Aminotransferase_I/II_large"/>
</dbReference>
<dbReference type="InterPro" id="IPR005861">
    <property type="entry name" value="HisP_aminotrans"/>
</dbReference>
<dbReference type="InterPro" id="IPR050106">
    <property type="entry name" value="HistidinolP_aminotransfase"/>
</dbReference>
<dbReference type="InterPro" id="IPR015424">
    <property type="entry name" value="PyrdxlP-dep_Trfase"/>
</dbReference>
<dbReference type="InterPro" id="IPR015421">
    <property type="entry name" value="PyrdxlP-dep_Trfase_major"/>
</dbReference>
<dbReference type="InterPro" id="IPR015422">
    <property type="entry name" value="PyrdxlP-dep_Trfase_small"/>
</dbReference>
<dbReference type="NCBIfam" id="TIGR01141">
    <property type="entry name" value="hisC"/>
    <property type="match status" value="1"/>
</dbReference>
<dbReference type="PANTHER" id="PTHR43643:SF3">
    <property type="entry name" value="HISTIDINOL-PHOSPHATE AMINOTRANSFERASE"/>
    <property type="match status" value="1"/>
</dbReference>
<dbReference type="PANTHER" id="PTHR43643">
    <property type="entry name" value="HISTIDINOL-PHOSPHATE AMINOTRANSFERASE 2"/>
    <property type="match status" value="1"/>
</dbReference>
<dbReference type="Pfam" id="PF00155">
    <property type="entry name" value="Aminotran_1_2"/>
    <property type="match status" value="1"/>
</dbReference>
<dbReference type="SUPFAM" id="SSF53383">
    <property type="entry name" value="PLP-dependent transferases"/>
    <property type="match status" value="1"/>
</dbReference>
<reference key="1">
    <citation type="submission" date="2005-09" db="EMBL/GenBank/DDBJ databases">
        <title>Complete sequence of chromosome 1 of Rhodobacter sphaeroides 2.4.1.</title>
        <authorList>
            <person name="Copeland A."/>
            <person name="Lucas S."/>
            <person name="Lapidus A."/>
            <person name="Barry K."/>
            <person name="Detter J.C."/>
            <person name="Glavina T."/>
            <person name="Hammon N."/>
            <person name="Israni S."/>
            <person name="Pitluck S."/>
            <person name="Richardson P."/>
            <person name="Mackenzie C."/>
            <person name="Choudhary M."/>
            <person name="Larimer F."/>
            <person name="Hauser L.J."/>
            <person name="Land M."/>
            <person name="Donohue T.J."/>
            <person name="Kaplan S."/>
        </authorList>
    </citation>
    <scope>NUCLEOTIDE SEQUENCE [LARGE SCALE GENOMIC DNA]</scope>
    <source>
        <strain>ATCC 17023 / DSM 158 / JCM 6121 / CCUG 31486 / LMG 2827 / NBRC 12203 / NCIMB 8253 / ATH 2.4.1.</strain>
    </source>
</reference>
<protein>
    <recommendedName>
        <fullName evidence="1">Histidinol-phosphate aminotransferase</fullName>
        <ecNumber evidence="1">2.6.1.9</ecNumber>
    </recommendedName>
    <alternativeName>
        <fullName evidence="1">Imidazole acetol-phosphate transaminase</fullName>
    </alternativeName>
</protein>
<sequence length="361" mass="39163">MSDAIRPQPGILDIALYEGGKSHVAGIQNALKLSSNENPFGPSPKAKEAFLRSVHTLHRYPSTDHAGLRHAIAEVHGLDPARVICGVGSDEIITFLCQAYAGPHTDVVFTEHGFLMYRISALAVGANPVEVPERERTTDVDAILAACTPHTRLVFLANPNNPTGTMIGQADLARLAAGLPAQAILVLDGAYAEYVPGYDAGLALIEERGNVVMTRTFSKIYGLGGLRVGWGYGPKAIIDVLNRIRGPFNLSTTQLETAEAAVRDQDHVARCRADNARWRIWLAEALAEIGVPSDTSMANFILARFSDTEEAEACDLHLQTQGLIVRRVAGYKLPHCLRITIGDEASCRRVAHAIGQFKRMR</sequence>
<feature type="chain" id="PRO_0000230222" description="Histidinol-phosphate aminotransferase">
    <location>
        <begin position="1"/>
        <end position="361"/>
    </location>
</feature>
<feature type="modified residue" description="N6-(pyridoxal phosphate)lysine" evidence="1">
    <location>
        <position position="219"/>
    </location>
</feature>
<evidence type="ECO:0000255" key="1">
    <source>
        <dbReference type="HAMAP-Rule" id="MF_01023"/>
    </source>
</evidence>
<name>HIS8_CERS4</name>
<proteinExistence type="inferred from homology"/>